<feature type="chain" id="PRO_0000414133" description="tRNA (guanine(37)-N(1))-methyltransferase">
    <location>
        <begin position="1"/>
        <end position="460"/>
    </location>
</feature>
<feature type="region of interest" description="Disordered" evidence="2">
    <location>
        <begin position="390"/>
        <end position="460"/>
    </location>
</feature>
<feature type="compositionally biased region" description="Low complexity" evidence="2">
    <location>
        <begin position="390"/>
        <end position="428"/>
    </location>
</feature>
<feature type="compositionally biased region" description="Acidic residues" evidence="2">
    <location>
        <begin position="442"/>
        <end position="451"/>
    </location>
</feature>
<feature type="binding site" evidence="1">
    <location>
        <position position="204"/>
    </location>
    <ligand>
        <name>S-adenosyl-L-methionine</name>
        <dbReference type="ChEBI" id="CHEBI:59789"/>
    </ligand>
</feature>
<feature type="binding site" evidence="1">
    <location>
        <begin position="243"/>
        <end position="244"/>
    </location>
    <ligand>
        <name>S-adenosyl-L-methionine</name>
        <dbReference type="ChEBI" id="CHEBI:59789"/>
    </ligand>
</feature>
<feature type="binding site" evidence="1">
    <location>
        <begin position="271"/>
        <end position="272"/>
    </location>
    <ligand>
        <name>S-adenosyl-L-methionine</name>
        <dbReference type="ChEBI" id="CHEBI:59789"/>
    </ligand>
</feature>
<feature type="binding site" evidence="1">
    <location>
        <position position="292"/>
    </location>
    <ligand>
        <name>S-adenosyl-L-methionine</name>
        <dbReference type="ChEBI" id="CHEBI:59789"/>
    </ligand>
</feature>
<protein>
    <recommendedName>
        <fullName evidence="1">tRNA (guanine(37)-N(1))-methyltransferase</fullName>
        <ecNumber evidence="1">2.1.1.228</ecNumber>
    </recommendedName>
    <alternativeName>
        <fullName evidence="1">M1G-methyltransferase</fullName>
    </alternativeName>
    <alternativeName>
        <fullName evidence="1">tRNA [GM37] methyltransferase</fullName>
    </alternativeName>
    <alternativeName>
        <fullName evidence="1">tRNA methyltransferase 5 homolog</fullName>
    </alternativeName>
</protein>
<sequence>MNVLNKEVFNQTKKVLGLIVSNKLVNGFSKQFKSYMFQSPKFKPIVSTDNDDKKMIYLCDTLKKETDIPDQLKTFIKENDIKVIEKDISLNYNNFSYEQVLKTLLPKDVGIPFSFERIGHIIHVNLKDEQLPFKYIIGQAILDKNIQVKTVLNKVGEIDTVFRTFKIEILAGEPDLVAEIKENECIFRFNFEEVYWNSRLQYEHMELVNTFKKEDIICDMFAGVGPFALPAAKIKKCKVYANDLNPSSVKYMKENAKTNRLESKVEISNLDARDFVKSLVEKSIPFTHVVMNLPSTSIEFLDVFRDIFLNSTIPPPIPPPIINCYTFTKLDESSDLIKDTIKNVENVIGAKVPSDYVCYEVRDVAPKKSMMRITFRMPTILPYVGSLTTASTTTTPTTSNTNTSTTTSTTSTSTTTTESTNTNNSANNVEDKNNKKRNSTEDSNETNETDSIDTNKKLKN</sequence>
<comment type="function">
    <text evidence="1">Specifically methylates the N1 position of guanosine-37 in various cytoplasmic and mitochondrial tRNAs. Methylation is not dependent on the nature of the nucleoside 5' of the target nucleoside. This is the first step in the biosynthesis of wybutosine (yW), a modified base adjacent to the anticodon of tRNAs and required for accurate decoding.</text>
</comment>
<comment type="catalytic activity">
    <reaction evidence="1">
        <text>guanosine(37) in tRNA + S-adenosyl-L-methionine = N(1)-methylguanosine(37) in tRNA + S-adenosyl-L-homocysteine + H(+)</text>
        <dbReference type="Rhea" id="RHEA:36899"/>
        <dbReference type="Rhea" id="RHEA-COMP:10145"/>
        <dbReference type="Rhea" id="RHEA-COMP:10147"/>
        <dbReference type="ChEBI" id="CHEBI:15378"/>
        <dbReference type="ChEBI" id="CHEBI:57856"/>
        <dbReference type="ChEBI" id="CHEBI:59789"/>
        <dbReference type="ChEBI" id="CHEBI:73542"/>
        <dbReference type="ChEBI" id="CHEBI:74269"/>
        <dbReference type="EC" id="2.1.1.228"/>
    </reaction>
</comment>
<comment type="subunit">
    <text evidence="1">Monomer.</text>
</comment>
<comment type="subcellular location">
    <subcellularLocation>
        <location evidence="1">Mitochondrion matrix</location>
    </subcellularLocation>
    <subcellularLocation>
        <location evidence="1">Nucleus</location>
    </subcellularLocation>
    <subcellularLocation>
        <location evidence="1">Cytoplasm</location>
    </subcellularLocation>
    <text evidence="1">Predominantly in the mitochondria and in the nucleus.</text>
</comment>
<comment type="similarity">
    <text evidence="3">Belongs to the class I-like SAM-binding methyltransferase superfamily. TRM5/TYW2 family.</text>
</comment>
<accession>Q54WD6</accession>
<evidence type="ECO:0000255" key="1">
    <source>
        <dbReference type="HAMAP-Rule" id="MF_03152"/>
    </source>
</evidence>
<evidence type="ECO:0000256" key="2">
    <source>
        <dbReference type="SAM" id="MobiDB-lite"/>
    </source>
</evidence>
<evidence type="ECO:0000305" key="3"/>
<gene>
    <name type="primary">trmt5</name>
    <name type="ORF">DDB_G0279739</name>
</gene>
<reference key="1">
    <citation type="journal article" date="2005" name="Nature">
        <title>The genome of the social amoeba Dictyostelium discoideum.</title>
        <authorList>
            <person name="Eichinger L."/>
            <person name="Pachebat J.A."/>
            <person name="Gloeckner G."/>
            <person name="Rajandream M.A."/>
            <person name="Sucgang R."/>
            <person name="Berriman M."/>
            <person name="Song J."/>
            <person name="Olsen R."/>
            <person name="Szafranski K."/>
            <person name="Xu Q."/>
            <person name="Tunggal B."/>
            <person name="Kummerfeld S."/>
            <person name="Madera M."/>
            <person name="Konfortov B.A."/>
            <person name="Rivero F."/>
            <person name="Bankier A.T."/>
            <person name="Lehmann R."/>
            <person name="Hamlin N."/>
            <person name="Davies R."/>
            <person name="Gaudet P."/>
            <person name="Fey P."/>
            <person name="Pilcher K."/>
            <person name="Chen G."/>
            <person name="Saunders D."/>
            <person name="Sodergren E.J."/>
            <person name="Davis P."/>
            <person name="Kerhornou A."/>
            <person name="Nie X."/>
            <person name="Hall N."/>
            <person name="Anjard C."/>
            <person name="Hemphill L."/>
            <person name="Bason N."/>
            <person name="Farbrother P."/>
            <person name="Desany B."/>
            <person name="Just E."/>
            <person name="Morio T."/>
            <person name="Rost R."/>
            <person name="Churcher C.M."/>
            <person name="Cooper J."/>
            <person name="Haydock S."/>
            <person name="van Driessche N."/>
            <person name="Cronin A."/>
            <person name="Goodhead I."/>
            <person name="Muzny D.M."/>
            <person name="Mourier T."/>
            <person name="Pain A."/>
            <person name="Lu M."/>
            <person name="Harper D."/>
            <person name="Lindsay R."/>
            <person name="Hauser H."/>
            <person name="James K.D."/>
            <person name="Quiles M."/>
            <person name="Madan Babu M."/>
            <person name="Saito T."/>
            <person name="Buchrieser C."/>
            <person name="Wardroper A."/>
            <person name="Felder M."/>
            <person name="Thangavelu M."/>
            <person name="Johnson D."/>
            <person name="Knights A."/>
            <person name="Loulseged H."/>
            <person name="Mungall K.L."/>
            <person name="Oliver K."/>
            <person name="Price C."/>
            <person name="Quail M.A."/>
            <person name="Urushihara H."/>
            <person name="Hernandez J."/>
            <person name="Rabbinowitsch E."/>
            <person name="Steffen D."/>
            <person name="Sanders M."/>
            <person name="Ma J."/>
            <person name="Kohara Y."/>
            <person name="Sharp S."/>
            <person name="Simmonds M.N."/>
            <person name="Spiegler S."/>
            <person name="Tivey A."/>
            <person name="Sugano S."/>
            <person name="White B."/>
            <person name="Walker D."/>
            <person name="Woodward J.R."/>
            <person name="Winckler T."/>
            <person name="Tanaka Y."/>
            <person name="Shaulsky G."/>
            <person name="Schleicher M."/>
            <person name="Weinstock G.M."/>
            <person name="Rosenthal A."/>
            <person name="Cox E.C."/>
            <person name="Chisholm R.L."/>
            <person name="Gibbs R.A."/>
            <person name="Loomis W.F."/>
            <person name="Platzer M."/>
            <person name="Kay R.R."/>
            <person name="Williams J.G."/>
            <person name="Dear P.H."/>
            <person name="Noegel A.A."/>
            <person name="Barrell B.G."/>
            <person name="Kuspa A."/>
        </authorList>
    </citation>
    <scope>NUCLEOTIDE SEQUENCE [LARGE SCALE GENOMIC DNA]</scope>
    <source>
        <strain>AX4</strain>
    </source>
</reference>
<keyword id="KW-0963">Cytoplasm</keyword>
<keyword id="KW-0489">Methyltransferase</keyword>
<keyword id="KW-0496">Mitochondrion</keyword>
<keyword id="KW-0539">Nucleus</keyword>
<keyword id="KW-1185">Reference proteome</keyword>
<keyword id="KW-0949">S-adenosyl-L-methionine</keyword>
<keyword id="KW-0808">Transferase</keyword>
<keyword id="KW-0819">tRNA processing</keyword>
<dbReference type="EC" id="2.1.1.228" evidence="1"/>
<dbReference type="EMBL" id="AAFI02000032">
    <property type="protein sequence ID" value="EAL67549.1"/>
    <property type="molecule type" value="Genomic_DNA"/>
</dbReference>
<dbReference type="RefSeq" id="XP_641522.1">
    <property type="nucleotide sequence ID" value="XM_636430.1"/>
</dbReference>
<dbReference type="SMR" id="Q54WD6"/>
<dbReference type="FunCoup" id="Q54WD6">
    <property type="interactions" value="749"/>
</dbReference>
<dbReference type="STRING" id="44689.Q54WD6"/>
<dbReference type="PaxDb" id="44689-DDB0237582"/>
<dbReference type="EnsemblProtists" id="EAL67549">
    <property type="protein sequence ID" value="EAL67549"/>
    <property type="gene ID" value="DDB_G0279739"/>
</dbReference>
<dbReference type="GeneID" id="8622195"/>
<dbReference type="KEGG" id="ddi:DDB_G0279739"/>
<dbReference type="dictyBase" id="DDB_G0279739">
    <property type="gene designation" value="trmt5"/>
</dbReference>
<dbReference type="VEuPathDB" id="AmoebaDB:DDB_G0279739"/>
<dbReference type="eggNOG" id="KOG2078">
    <property type="taxonomic scope" value="Eukaryota"/>
</dbReference>
<dbReference type="HOGENOM" id="CLU_022610_2_3_1"/>
<dbReference type="InParanoid" id="Q54WD6"/>
<dbReference type="OMA" id="VGSHSQF"/>
<dbReference type="PhylomeDB" id="Q54WD6"/>
<dbReference type="PRO" id="PR:Q54WD6"/>
<dbReference type="Proteomes" id="UP000002195">
    <property type="component" value="Chromosome 3"/>
</dbReference>
<dbReference type="GO" id="GO:0005737">
    <property type="term" value="C:cytoplasm"/>
    <property type="evidence" value="ECO:0000318"/>
    <property type="project" value="GO_Central"/>
</dbReference>
<dbReference type="GO" id="GO:0005759">
    <property type="term" value="C:mitochondrial matrix"/>
    <property type="evidence" value="ECO:0000318"/>
    <property type="project" value="GO_Central"/>
</dbReference>
<dbReference type="GO" id="GO:0005634">
    <property type="term" value="C:nucleus"/>
    <property type="evidence" value="ECO:0007669"/>
    <property type="project" value="UniProtKB-SubCell"/>
</dbReference>
<dbReference type="GO" id="GO:0052906">
    <property type="term" value="F:tRNA (guanine(37)-N1)-methyltransferase activity"/>
    <property type="evidence" value="ECO:0007669"/>
    <property type="project" value="UniProtKB-UniRule"/>
</dbReference>
<dbReference type="GO" id="GO:0008175">
    <property type="term" value="F:tRNA methyltransferase activity"/>
    <property type="evidence" value="ECO:0000318"/>
    <property type="project" value="GO_Central"/>
</dbReference>
<dbReference type="GO" id="GO:0070901">
    <property type="term" value="P:mitochondrial tRNA methylation"/>
    <property type="evidence" value="ECO:0000318"/>
    <property type="project" value="GO_Central"/>
</dbReference>
<dbReference type="GO" id="GO:0002939">
    <property type="term" value="P:tRNA N1-guanine methylation"/>
    <property type="evidence" value="ECO:0000318"/>
    <property type="project" value="GO_Central"/>
</dbReference>
<dbReference type="CDD" id="cd02440">
    <property type="entry name" value="AdoMet_MTases"/>
    <property type="match status" value="1"/>
</dbReference>
<dbReference type="FunFam" id="3.30.300.110:FF:000001">
    <property type="entry name" value="tRNA (guanine(37)-N1)-methyltransferase"/>
    <property type="match status" value="1"/>
</dbReference>
<dbReference type="Gene3D" id="3.30.300.110">
    <property type="entry name" value="Met-10+ protein-like domains"/>
    <property type="match status" value="1"/>
</dbReference>
<dbReference type="Gene3D" id="3.40.50.150">
    <property type="entry name" value="Vaccinia Virus protein VP39"/>
    <property type="match status" value="1"/>
</dbReference>
<dbReference type="HAMAP" id="MF_03152">
    <property type="entry name" value="TRM5"/>
    <property type="match status" value="1"/>
</dbReference>
<dbReference type="InterPro" id="IPR030382">
    <property type="entry name" value="MeTrfase_TRM5/TYW2"/>
</dbReference>
<dbReference type="InterPro" id="IPR029063">
    <property type="entry name" value="SAM-dependent_MTases_sf"/>
</dbReference>
<dbReference type="InterPro" id="IPR056743">
    <property type="entry name" value="TRM5-TYW2-like_MTfase"/>
</dbReference>
<dbReference type="InterPro" id="IPR056744">
    <property type="entry name" value="TRM5/TYW2-like_N"/>
</dbReference>
<dbReference type="InterPro" id="IPR025792">
    <property type="entry name" value="tRNA_Gua_MeTrfase_euk"/>
</dbReference>
<dbReference type="PANTHER" id="PTHR23245:SF36">
    <property type="entry name" value="TRNA (GUANINE(37)-N1)-METHYLTRANSFERASE"/>
    <property type="match status" value="1"/>
</dbReference>
<dbReference type="PANTHER" id="PTHR23245">
    <property type="entry name" value="TRNA METHYLTRANSFERASE"/>
    <property type="match status" value="1"/>
</dbReference>
<dbReference type="Pfam" id="PF02475">
    <property type="entry name" value="TRM5-TYW2_MTfase"/>
    <property type="match status" value="1"/>
</dbReference>
<dbReference type="Pfam" id="PF25133">
    <property type="entry name" value="TYW2_N_2"/>
    <property type="match status" value="1"/>
</dbReference>
<dbReference type="SUPFAM" id="SSF53335">
    <property type="entry name" value="S-adenosyl-L-methionine-dependent methyltransferases"/>
    <property type="match status" value="1"/>
</dbReference>
<dbReference type="PROSITE" id="PS51684">
    <property type="entry name" value="SAM_MT_TRM5_TYW2"/>
    <property type="match status" value="1"/>
</dbReference>
<name>TRM5_DICDI</name>
<organism>
    <name type="scientific">Dictyostelium discoideum</name>
    <name type="common">Social amoeba</name>
    <dbReference type="NCBI Taxonomy" id="44689"/>
    <lineage>
        <taxon>Eukaryota</taxon>
        <taxon>Amoebozoa</taxon>
        <taxon>Evosea</taxon>
        <taxon>Eumycetozoa</taxon>
        <taxon>Dictyostelia</taxon>
        <taxon>Dictyosteliales</taxon>
        <taxon>Dictyosteliaceae</taxon>
        <taxon>Dictyostelium</taxon>
    </lineage>
</organism>
<proteinExistence type="inferred from homology"/>